<dbReference type="EC" id="7.4.2.11" evidence="1"/>
<dbReference type="EMBL" id="CP000423">
    <property type="protein sequence ID" value="ABJ69965.1"/>
    <property type="molecule type" value="Genomic_DNA"/>
</dbReference>
<dbReference type="RefSeq" id="WP_011674412.1">
    <property type="nucleotide sequence ID" value="NC_008526.1"/>
</dbReference>
<dbReference type="RefSeq" id="YP_806407.1">
    <property type="nucleotide sequence ID" value="NC_008526.1"/>
</dbReference>
<dbReference type="SMR" id="Q03A07"/>
<dbReference type="STRING" id="321967.LSEI_1178"/>
<dbReference type="PaxDb" id="321967-LSEI_1178"/>
<dbReference type="KEGG" id="lca:LSEI_1178"/>
<dbReference type="PATRIC" id="fig|321967.11.peg.1152"/>
<dbReference type="HOGENOM" id="CLU_000604_1_3_9"/>
<dbReference type="Proteomes" id="UP000001651">
    <property type="component" value="Chromosome"/>
</dbReference>
<dbReference type="GO" id="GO:0005886">
    <property type="term" value="C:plasma membrane"/>
    <property type="evidence" value="ECO:0007669"/>
    <property type="project" value="UniProtKB-SubCell"/>
</dbReference>
<dbReference type="GO" id="GO:0033232">
    <property type="term" value="F:ABC-type D-methionine transporter activity"/>
    <property type="evidence" value="ECO:0007669"/>
    <property type="project" value="UniProtKB-EC"/>
</dbReference>
<dbReference type="GO" id="GO:0005524">
    <property type="term" value="F:ATP binding"/>
    <property type="evidence" value="ECO:0007669"/>
    <property type="project" value="UniProtKB-KW"/>
</dbReference>
<dbReference type="GO" id="GO:0016887">
    <property type="term" value="F:ATP hydrolysis activity"/>
    <property type="evidence" value="ECO:0007669"/>
    <property type="project" value="InterPro"/>
</dbReference>
<dbReference type="CDD" id="cd03258">
    <property type="entry name" value="ABC_MetN_methionine_transporter"/>
    <property type="match status" value="1"/>
</dbReference>
<dbReference type="Gene3D" id="3.30.70.260">
    <property type="match status" value="1"/>
</dbReference>
<dbReference type="Gene3D" id="3.40.50.300">
    <property type="entry name" value="P-loop containing nucleotide triphosphate hydrolases"/>
    <property type="match status" value="1"/>
</dbReference>
<dbReference type="InterPro" id="IPR003593">
    <property type="entry name" value="AAA+_ATPase"/>
</dbReference>
<dbReference type="InterPro" id="IPR003439">
    <property type="entry name" value="ABC_transporter-like_ATP-bd"/>
</dbReference>
<dbReference type="InterPro" id="IPR017871">
    <property type="entry name" value="ABC_transporter-like_CS"/>
</dbReference>
<dbReference type="InterPro" id="IPR045865">
    <property type="entry name" value="ACT-like_dom_sf"/>
</dbReference>
<dbReference type="InterPro" id="IPR041701">
    <property type="entry name" value="MetN_ABC"/>
</dbReference>
<dbReference type="InterPro" id="IPR050086">
    <property type="entry name" value="MetN_ABC_transporter-like"/>
</dbReference>
<dbReference type="InterPro" id="IPR018449">
    <property type="entry name" value="NIL_domain"/>
</dbReference>
<dbReference type="InterPro" id="IPR027417">
    <property type="entry name" value="P-loop_NTPase"/>
</dbReference>
<dbReference type="PANTHER" id="PTHR43166">
    <property type="entry name" value="AMINO ACID IMPORT ATP-BINDING PROTEIN"/>
    <property type="match status" value="1"/>
</dbReference>
<dbReference type="PANTHER" id="PTHR43166:SF30">
    <property type="entry name" value="METHIONINE IMPORT ATP-BINDING PROTEIN METN"/>
    <property type="match status" value="1"/>
</dbReference>
<dbReference type="Pfam" id="PF00005">
    <property type="entry name" value="ABC_tran"/>
    <property type="match status" value="1"/>
</dbReference>
<dbReference type="Pfam" id="PF09383">
    <property type="entry name" value="NIL"/>
    <property type="match status" value="1"/>
</dbReference>
<dbReference type="SMART" id="SM00382">
    <property type="entry name" value="AAA"/>
    <property type="match status" value="1"/>
</dbReference>
<dbReference type="SMART" id="SM00930">
    <property type="entry name" value="NIL"/>
    <property type="match status" value="1"/>
</dbReference>
<dbReference type="SUPFAM" id="SSF55021">
    <property type="entry name" value="ACT-like"/>
    <property type="match status" value="1"/>
</dbReference>
<dbReference type="SUPFAM" id="SSF52540">
    <property type="entry name" value="P-loop containing nucleoside triphosphate hydrolases"/>
    <property type="match status" value="1"/>
</dbReference>
<dbReference type="PROSITE" id="PS00211">
    <property type="entry name" value="ABC_TRANSPORTER_1"/>
    <property type="match status" value="1"/>
</dbReference>
<dbReference type="PROSITE" id="PS50893">
    <property type="entry name" value="ABC_TRANSPORTER_2"/>
    <property type="match status" value="1"/>
</dbReference>
<dbReference type="PROSITE" id="PS51264">
    <property type="entry name" value="METN"/>
    <property type="match status" value="1"/>
</dbReference>
<name>METN_LACP3</name>
<protein>
    <recommendedName>
        <fullName evidence="1">Methionine import ATP-binding protein MetN</fullName>
        <ecNumber evidence="1">7.4.2.11</ecNumber>
    </recommendedName>
</protein>
<accession>Q03A07</accession>
<keyword id="KW-0029">Amino-acid transport</keyword>
<keyword id="KW-0067">ATP-binding</keyword>
<keyword id="KW-1003">Cell membrane</keyword>
<keyword id="KW-0472">Membrane</keyword>
<keyword id="KW-0547">Nucleotide-binding</keyword>
<keyword id="KW-1185">Reference proteome</keyword>
<keyword id="KW-1278">Translocase</keyword>
<keyword id="KW-0813">Transport</keyword>
<feature type="chain" id="PRO_0000277682" description="Methionine import ATP-binding protein MetN">
    <location>
        <begin position="1"/>
        <end position="350"/>
    </location>
</feature>
<feature type="domain" description="ABC transporter" evidence="1">
    <location>
        <begin position="9"/>
        <end position="245"/>
    </location>
</feature>
<feature type="binding site" evidence="1">
    <location>
        <begin position="43"/>
        <end position="50"/>
    </location>
    <ligand>
        <name>ATP</name>
        <dbReference type="ChEBI" id="CHEBI:30616"/>
    </ligand>
</feature>
<gene>
    <name evidence="1" type="primary">metN</name>
    <name type="ordered locus">LSEI_1178</name>
</gene>
<reference key="1">
    <citation type="journal article" date="2006" name="Proc. Natl. Acad. Sci. U.S.A.">
        <title>Comparative genomics of the lactic acid bacteria.</title>
        <authorList>
            <person name="Makarova K.S."/>
            <person name="Slesarev A."/>
            <person name="Wolf Y.I."/>
            <person name="Sorokin A."/>
            <person name="Mirkin B."/>
            <person name="Koonin E.V."/>
            <person name="Pavlov A."/>
            <person name="Pavlova N."/>
            <person name="Karamychev V."/>
            <person name="Polouchine N."/>
            <person name="Shakhova V."/>
            <person name="Grigoriev I."/>
            <person name="Lou Y."/>
            <person name="Rohksar D."/>
            <person name="Lucas S."/>
            <person name="Huang K."/>
            <person name="Goodstein D.M."/>
            <person name="Hawkins T."/>
            <person name="Plengvidhya V."/>
            <person name="Welker D."/>
            <person name="Hughes J."/>
            <person name="Goh Y."/>
            <person name="Benson A."/>
            <person name="Baldwin K."/>
            <person name="Lee J.-H."/>
            <person name="Diaz-Muniz I."/>
            <person name="Dosti B."/>
            <person name="Smeianov V."/>
            <person name="Wechter W."/>
            <person name="Barabote R."/>
            <person name="Lorca G."/>
            <person name="Altermann E."/>
            <person name="Barrangou R."/>
            <person name="Ganesan B."/>
            <person name="Xie Y."/>
            <person name="Rawsthorne H."/>
            <person name="Tamir D."/>
            <person name="Parker C."/>
            <person name="Breidt F."/>
            <person name="Broadbent J.R."/>
            <person name="Hutkins R."/>
            <person name="O'Sullivan D."/>
            <person name="Steele J."/>
            <person name="Unlu G."/>
            <person name="Saier M.H. Jr."/>
            <person name="Klaenhammer T."/>
            <person name="Richardson P."/>
            <person name="Kozyavkin S."/>
            <person name="Weimer B.C."/>
            <person name="Mills D.A."/>
        </authorList>
    </citation>
    <scope>NUCLEOTIDE SEQUENCE [LARGE SCALE GENOMIC DNA]</scope>
    <source>
        <strain>ATCC 334 / BCRC 17002 / CCUG 31169 / CIP 107868 / KCTC 3260 / NRRL B-441</strain>
    </source>
</reference>
<comment type="function">
    <text evidence="1">Part of the ABC transporter complex MetNIQ involved in methionine import. Responsible for energy coupling to the transport system.</text>
</comment>
<comment type="catalytic activity">
    <reaction evidence="1">
        <text>L-methionine(out) + ATP + H2O = L-methionine(in) + ADP + phosphate + H(+)</text>
        <dbReference type="Rhea" id="RHEA:29779"/>
        <dbReference type="ChEBI" id="CHEBI:15377"/>
        <dbReference type="ChEBI" id="CHEBI:15378"/>
        <dbReference type="ChEBI" id="CHEBI:30616"/>
        <dbReference type="ChEBI" id="CHEBI:43474"/>
        <dbReference type="ChEBI" id="CHEBI:57844"/>
        <dbReference type="ChEBI" id="CHEBI:456216"/>
        <dbReference type="EC" id="7.4.2.11"/>
    </reaction>
</comment>
<comment type="catalytic activity">
    <reaction evidence="1">
        <text>D-methionine(out) + ATP + H2O = D-methionine(in) + ADP + phosphate + H(+)</text>
        <dbReference type="Rhea" id="RHEA:29767"/>
        <dbReference type="ChEBI" id="CHEBI:15377"/>
        <dbReference type="ChEBI" id="CHEBI:15378"/>
        <dbReference type="ChEBI" id="CHEBI:30616"/>
        <dbReference type="ChEBI" id="CHEBI:43474"/>
        <dbReference type="ChEBI" id="CHEBI:57932"/>
        <dbReference type="ChEBI" id="CHEBI:456216"/>
        <dbReference type="EC" id="7.4.2.11"/>
    </reaction>
</comment>
<comment type="subunit">
    <text evidence="1">The complex is composed of two ATP-binding proteins (MetN), two transmembrane proteins (MetI) and a solute-binding protein (MetQ).</text>
</comment>
<comment type="subcellular location">
    <subcellularLocation>
        <location evidence="1">Cell membrane</location>
        <topology evidence="1">Peripheral membrane protein</topology>
    </subcellularLocation>
</comment>
<comment type="similarity">
    <text evidence="1">Belongs to the ABC transporter superfamily. Methionine importer (TC 3.A.1.24) family.</text>
</comment>
<proteinExistence type="inferred from homology"/>
<organism>
    <name type="scientific">Lacticaseibacillus paracasei (strain ATCC 334 / BCRC 17002 / CCUG 31169 / CIP 107868 / KCTC 3260 / NRRL B-441)</name>
    <name type="common">Lactobacillus paracasei</name>
    <dbReference type="NCBI Taxonomy" id="321967"/>
    <lineage>
        <taxon>Bacteria</taxon>
        <taxon>Bacillati</taxon>
        <taxon>Bacillota</taxon>
        <taxon>Bacilli</taxon>
        <taxon>Lactobacillales</taxon>
        <taxon>Lactobacillaceae</taxon>
        <taxon>Lacticaseibacillus</taxon>
    </lineage>
</organism>
<evidence type="ECO:0000255" key="1">
    <source>
        <dbReference type="HAMAP-Rule" id="MF_01719"/>
    </source>
</evidence>
<sequence length="350" mass="38263">MSDQAVVTLKDVDVEFHGKTRSVHAVDHVDLTVNRGDIYGIVGYSGAGKSTLVRTINLLQRPTGGSVNVLGQDMLALSPAQLRKERKRIGMIFQHFNLMNSRTIADNVAFPLKGLKSKQAIQKKVAELLDLVGLTDRANSYPAQLSGGQKQRVGIARALASDPEILISDEATSALDPKTTSSILELLQSLNQRLGLTIVLITHQMEAVKQICNRVAVMDDGAIIECGDLLQVFSNPQQQLTKDFIDTTLQLDQAIDAVMQQPTVKNLGPDDRLLRLTYVGDSADQPLVAKLFSSYHVTANILFGDIQILQDTPFGNLIVVLSGDHDEVESGIAYLKQQDVKIEDILKKEA</sequence>